<organism>
    <name type="scientific">Burkholderia mallei (strain ATCC 23344)</name>
    <dbReference type="NCBI Taxonomy" id="243160"/>
    <lineage>
        <taxon>Bacteria</taxon>
        <taxon>Pseudomonadati</taxon>
        <taxon>Pseudomonadota</taxon>
        <taxon>Betaproteobacteria</taxon>
        <taxon>Burkholderiales</taxon>
        <taxon>Burkholderiaceae</taxon>
        <taxon>Burkholderia</taxon>
        <taxon>pseudomallei group</taxon>
    </lineage>
</organism>
<accession>Q62HD6</accession>
<keyword id="KW-0143">Chaperone</keyword>
<keyword id="KW-0963">Cytoplasm</keyword>
<keyword id="KW-0235">DNA replication</keyword>
<keyword id="KW-0479">Metal-binding</keyword>
<keyword id="KW-1185">Reference proteome</keyword>
<keyword id="KW-0677">Repeat</keyword>
<keyword id="KW-0346">Stress response</keyword>
<keyword id="KW-0862">Zinc</keyword>
<keyword id="KW-0863">Zinc-finger</keyword>
<name>DNAJ_BURMA</name>
<protein>
    <recommendedName>
        <fullName evidence="1">Chaperone protein DnaJ</fullName>
    </recommendedName>
</protein>
<dbReference type="EMBL" id="CP000010">
    <property type="protein sequence ID" value="AAU49785.1"/>
    <property type="molecule type" value="Genomic_DNA"/>
</dbReference>
<dbReference type="RefSeq" id="WP_004194374.1">
    <property type="nucleotide sequence ID" value="NC_006348.1"/>
</dbReference>
<dbReference type="RefSeq" id="YP_103884.1">
    <property type="nucleotide sequence ID" value="NC_006348.1"/>
</dbReference>
<dbReference type="SMR" id="Q62HD6"/>
<dbReference type="GeneID" id="92980017"/>
<dbReference type="KEGG" id="bma:BMA2325"/>
<dbReference type="PATRIC" id="fig|243160.12.peg.2392"/>
<dbReference type="eggNOG" id="COG0484">
    <property type="taxonomic scope" value="Bacteria"/>
</dbReference>
<dbReference type="HOGENOM" id="CLU_017633_0_7_4"/>
<dbReference type="Proteomes" id="UP000006693">
    <property type="component" value="Chromosome 1"/>
</dbReference>
<dbReference type="GO" id="GO:0005737">
    <property type="term" value="C:cytoplasm"/>
    <property type="evidence" value="ECO:0007669"/>
    <property type="project" value="UniProtKB-SubCell"/>
</dbReference>
<dbReference type="GO" id="GO:0005524">
    <property type="term" value="F:ATP binding"/>
    <property type="evidence" value="ECO:0007669"/>
    <property type="project" value="InterPro"/>
</dbReference>
<dbReference type="GO" id="GO:0031072">
    <property type="term" value="F:heat shock protein binding"/>
    <property type="evidence" value="ECO:0007669"/>
    <property type="project" value="InterPro"/>
</dbReference>
<dbReference type="GO" id="GO:0051082">
    <property type="term" value="F:unfolded protein binding"/>
    <property type="evidence" value="ECO:0007669"/>
    <property type="project" value="UniProtKB-UniRule"/>
</dbReference>
<dbReference type="GO" id="GO:0008270">
    <property type="term" value="F:zinc ion binding"/>
    <property type="evidence" value="ECO:0007669"/>
    <property type="project" value="UniProtKB-UniRule"/>
</dbReference>
<dbReference type="GO" id="GO:0051085">
    <property type="term" value="P:chaperone cofactor-dependent protein refolding"/>
    <property type="evidence" value="ECO:0007669"/>
    <property type="project" value="TreeGrafter"/>
</dbReference>
<dbReference type="GO" id="GO:0006260">
    <property type="term" value="P:DNA replication"/>
    <property type="evidence" value="ECO:0007669"/>
    <property type="project" value="UniProtKB-KW"/>
</dbReference>
<dbReference type="GO" id="GO:0042026">
    <property type="term" value="P:protein refolding"/>
    <property type="evidence" value="ECO:0007669"/>
    <property type="project" value="TreeGrafter"/>
</dbReference>
<dbReference type="GO" id="GO:0009408">
    <property type="term" value="P:response to heat"/>
    <property type="evidence" value="ECO:0007669"/>
    <property type="project" value="InterPro"/>
</dbReference>
<dbReference type="CDD" id="cd06257">
    <property type="entry name" value="DnaJ"/>
    <property type="match status" value="1"/>
</dbReference>
<dbReference type="CDD" id="cd10747">
    <property type="entry name" value="DnaJ_C"/>
    <property type="match status" value="1"/>
</dbReference>
<dbReference type="CDD" id="cd10719">
    <property type="entry name" value="DnaJ_zf"/>
    <property type="match status" value="1"/>
</dbReference>
<dbReference type="FunFam" id="1.10.287.110:FF:000031">
    <property type="entry name" value="Molecular chaperone DnaJ"/>
    <property type="match status" value="1"/>
</dbReference>
<dbReference type="FunFam" id="2.10.230.10:FF:000002">
    <property type="entry name" value="Molecular chaperone DnaJ"/>
    <property type="match status" value="1"/>
</dbReference>
<dbReference type="FunFam" id="2.60.260.20:FF:000004">
    <property type="entry name" value="Molecular chaperone DnaJ"/>
    <property type="match status" value="1"/>
</dbReference>
<dbReference type="Gene3D" id="1.10.287.110">
    <property type="entry name" value="DnaJ domain"/>
    <property type="match status" value="1"/>
</dbReference>
<dbReference type="Gene3D" id="2.10.230.10">
    <property type="entry name" value="Heat shock protein DnaJ, cysteine-rich domain"/>
    <property type="match status" value="1"/>
</dbReference>
<dbReference type="Gene3D" id="2.60.260.20">
    <property type="entry name" value="Urease metallochaperone UreE, N-terminal domain"/>
    <property type="match status" value="2"/>
</dbReference>
<dbReference type="HAMAP" id="MF_01152">
    <property type="entry name" value="DnaJ"/>
    <property type="match status" value="1"/>
</dbReference>
<dbReference type="InterPro" id="IPR012724">
    <property type="entry name" value="DnaJ"/>
</dbReference>
<dbReference type="InterPro" id="IPR002939">
    <property type="entry name" value="DnaJ_C"/>
</dbReference>
<dbReference type="InterPro" id="IPR001623">
    <property type="entry name" value="DnaJ_domain"/>
</dbReference>
<dbReference type="InterPro" id="IPR018253">
    <property type="entry name" value="DnaJ_domain_CS"/>
</dbReference>
<dbReference type="InterPro" id="IPR008971">
    <property type="entry name" value="HSP40/DnaJ_pept-bd"/>
</dbReference>
<dbReference type="InterPro" id="IPR001305">
    <property type="entry name" value="HSP_DnaJ_Cys-rich_dom"/>
</dbReference>
<dbReference type="InterPro" id="IPR036410">
    <property type="entry name" value="HSP_DnaJ_Cys-rich_dom_sf"/>
</dbReference>
<dbReference type="InterPro" id="IPR036869">
    <property type="entry name" value="J_dom_sf"/>
</dbReference>
<dbReference type="NCBIfam" id="TIGR02349">
    <property type="entry name" value="DnaJ_bact"/>
    <property type="match status" value="1"/>
</dbReference>
<dbReference type="NCBIfam" id="NF008035">
    <property type="entry name" value="PRK10767.1"/>
    <property type="match status" value="1"/>
</dbReference>
<dbReference type="PANTHER" id="PTHR43096:SF48">
    <property type="entry name" value="CHAPERONE PROTEIN DNAJ"/>
    <property type="match status" value="1"/>
</dbReference>
<dbReference type="PANTHER" id="PTHR43096">
    <property type="entry name" value="DNAJ HOMOLOG 1, MITOCHONDRIAL-RELATED"/>
    <property type="match status" value="1"/>
</dbReference>
<dbReference type="Pfam" id="PF00226">
    <property type="entry name" value="DnaJ"/>
    <property type="match status" value="1"/>
</dbReference>
<dbReference type="Pfam" id="PF01556">
    <property type="entry name" value="DnaJ_C"/>
    <property type="match status" value="1"/>
</dbReference>
<dbReference type="Pfam" id="PF00684">
    <property type="entry name" value="DnaJ_CXXCXGXG"/>
    <property type="match status" value="1"/>
</dbReference>
<dbReference type="PRINTS" id="PR00625">
    <property type="entry name" value="JDOMAIN"/>
</dbReference>
<dbReference type="SMART" id="SM00271">
    <property type="entry name" value="DnaJ"/>
    <property type="match status" value="1"/>
</dbReference>
<dbReference type="SUPFAM" id="SSF46565">
    <property type="entry name" value="Chaperone J-domain"/>
    <property type="match status" value="1"/>
</dbReference>
<dbReference type="SUPFAM" id="SSF57938">
    <property type="entry name" value="DnaJ/Hsp40 cysteine-rich domain"/>
    <property type="match status" value="1"/>
</dbReference>
<dbReference type="SUPFAM" id="SSF49493">
    <property type="entry name" value="HSP40/DnaJ peptide-binding domain"/>
    <property type="match status" value="2"/>
</dbReference>
<dbReference type="PROSITE" id="PS00636">
    <property type="entry name" value="DNAJ_1"/>
    <property type="match status" value="1"/>
</dbReference>
<dbReference type="PROSITE" id="PS50076">
    <property type="entry name" value="DNAJ_2"/>
    <property type="match status" value="1"/>
</dbReference>
<dbReference type="PROSITE" id="PS51188">
    <property type="entry name" value="ZF_CR"/>
    <property type="match status" value="1"/>
</dbReference>
<proteinExistence type="inferred from homology"/>
<evidence type="ECO:0000255" key="1">
    <source>
        <dbReference type="HAMAP-Rule" id="MF_01152"/>
    </source>
</evidence>
<reference key="1">
    <citation type="journal article" date="2004" name="Proc. Natl. Acad. Sci. U.S.A.">
        <title>Structural flexibility in the Burkholderia mallei genome.</title>
        <authorList>
            <person name="Nierman W.C."/>
            <person name="DeShazer D."/>
            <person name="Kim H.S."/>
            <person name="Tettelin H."/>
            <person name="Nelson K.E."/>
            <person name="Feldblyum T.V."/>
            <person name="Ulrich R.L."/>
            <person name="Ronning C.M."/>
            <person name="Brinkac L.M."/>
            <person name="Daugherty S.C."/>
            <person name="Davidsen T.D."/>
            <person name="DeBoy R.T."/>
            <person name="Dimitrov G."/>
            <person name="Dodson R.J."/>
            <person name="Durkin A.S."/>
            <person name="Gwinn M.L."/>
            <person name="Haft D.H."/>
            <person name="Khouri H.M."/>
            <person name="Kolonay J.F."/>
            <person name="Madupu R."/>
            <person name="Mohammoud Y."/>
            <person name="Nelson W.C."/>
            <person name="Radune D."/>
            <person name="Romero C.M."/>
            <person name="Sarria S."/>
            <person name="Selengut J."/>
            <person name="Shamblin C."/>
            <person name="Sullivan S.A."/>
            <person name="White O."/>
            <person name="Yu Y."/>
            <person name="Zafar N."/>
            <person name="Zhou L."/>
            <person name="Fraser C.M."/>
        </authorList>
    </citation>
    <scope>NUCLEOTIDE SEQUENCE [LARGE SCALE GENOMIC DNA]</scope>
    <source>
        <strain>ATCC 23344</strain>
    </source>
</reference>
<feature type="chain" id="PRO_0000070748" description="Chaperone protein DnaJ">
    <location>
        <begin position="1"/>
        <end position="376"/>
    </location>
</feature>
<feature type="domain" description="J" evidence="1">
    <location>
        <begin position="5"/>
        <end position="70"/>
    </location>
</feature>
<feature type="repeat" description="CXXCXGXG motif">
    <location>
        <begin position="149"/>
        <end position="156"/>
    </location>
</feature>
<feature type="repeat" description="CXXCXGXG motif">
    <location>
        <begin position="166"/>
        <end position="173"/>
    </location>
</feature>
<feature type="repeat" description="CXXCXGXG motif">
    <location>
        <begin position="188"/>
        <end position="195"/>
    </location>
</feature>
<feature type="repeat" description="CXXCXGXG motif">
    <location>
        <begin position="202"/>
        <end position="209"/>
    </location>
</feature>
<feature type="zinc finger region" description="CR-type" evidence="1">
    <location>
        <begin position="136"/>
        <end position="214"/>
    </location>
</feature>
<feature type="binding site" evidence="1">
    <location>
        <position position="149"/>
    </location>
    <ligand>
        <name>Zn(2+)</name>
        <dbReference type="ChEBI" id="CHEBI:29105"/>
        <label>1</label>
    </ligand>
</feature>
<feature type="binding site" evidence="1">
    <location>
        <position position="152"/>
    </location>
    <ligand>
        <name>Zn(2+)</name>
        <dbReference type="ChEBI" id="CHEBI:29105"/>
        <label>1</label>
    </ligand>
</feature>
<feature type="binding site" evidence="1">
    <location>
        <position position="166"/>
    </location>
    <ligand>
        <name>Zn(2+)</name>
        <dbReference type="ChEBI" id="CHEBI:29105"/>
        <label>2</label>
    </ligand>
</feature>
<feature type="binding site" evidence="1">
    <location>
        <position position="169"/>
    </location>
    <ligand>
        <name>Zn(2+)</name>
        <dbReference type="ChEBI" id="CHEBI:29105"/>
        <label>2</label>
    </ligand>
</feature>
<feature type="binding site" evidence="1">
    <location>
        <position position="188"/>
    </location>
    <ligand>
        <name>Zn(2+)</name>
        <dbReference type="ChEBI" id="CHEBI:29105"/>
        <label>2</label>
    </ligand>
</feature>
<feature type="binding site" evidence="1">
    <location>
        <position position="191"/>
    </location>
    <ligand>
        <name>Zn(2+)</name>
        <dbReference type="ChEBI" id="CHEBI:29105"/>
        <label>2</label>
    </ligand>
</feature>
<feature type="binding site" evidence="1">
    <location>
        <position position="202"/>
    </location>
    <ligand>
        <name>Zn(2+)</name>
        <dbReference type="ChEBI" id="CHEBI:29105"/>
        <label>1</label>
    </ligand>
</feature>
<feature type="binding site" evidence="1">
    <location>
        <position position="205"/>
    </location>
    <ligand>
        <name>Zn(2+)</name>
        <dbReference type="ChEBI" id="CHEBI:29105"/>
        <label>1</label>
    </ligand>
</feature>
<comment type="function">
    <text evidence="1">Participates actively in the response to hyperosmotic and heat shock by preventing the aggregation of stress-denatured proteins and by disaggregating proteins, also in an autonomous, DnaK-independent fashion. Unfolded proteins bind initially to DnaJ; upon interaction with the DnaJ-bound protein, DnaK hydrolyzes its bound ATP, resulting in the formation of a stable complex. GrpE releases ADP from DnaK; ATP binding to DnaK triggers the release of the substrate protein, thus completing the reaction cycle. Several rounds of ATP-dependent interactions between DnaJ, DnaK and GrpE are required for fully efficient folding. Also involved, together with DnaK and GrpE, in the DNA replication of plasmids through activation of initiation proteins.</text>
</comment>
<comment type="cofactor">
    <cofactor evidence="1">
        <name>Zn(2+)</name>
        <dbReference type="ChEBI" id="CHEBI:29105"/>
    </cofactor>
    <text evidence="1">Binds 2 Zn(2+) ions per monomer.</text>
</comment>
<comment type="subunit">
    <text evidence="1">Homodimer.</text>
</comment>
<comment type="subcellular location">
    <subcellularLocation>
        <location evidence="1">Cytoplasm</location>
    </subcellularLocation>
</comment>
<comment type="domain">
    <text evidence="1">The J domain is necessary and sufficient to stimulate DnaK ATPase activity. Zinc center 1 plays an important role in the autonomous, DnaK-independent chaperone activity of DnaJ. Zinc center 2 is essential for interaction with DnaK and for DnaJ activity.</text>
</comment>
<comment type="similarity">
    <text evidence="1">Belongs to the DnaJ family.</text>
</comment>
<gene>
    <name evidence="1" type="primary">dnaJ</name>
    <name type="ordered locus">BMA2325</name>
</gene>
<sequence length="376" mass="40549">MAKRDYYEVLGVAKNASDDEIKKAYRKLAMKYHPDRNPDSKDAEEHFKEAKEAYEMLSDGQKRAAYDQYGHAGVDPNVGAAGAQGFGGFADAFGDIFGDIFGQAAGGGRARGGPQVYRGADLRYSMEITLEQAAHGYDTQIRVPSWAACGVCHGSGAKPGTKPETCPTCHGQGTVRMSQGFFSIQQTCPKCHGTGTYIPEPCAHCHGSGKVKETKTLEVKIPAGIDDGMRIRSAGNGEPGINGGPSGDLYVEIHIKPHAVFERDGDDLHCQMPIPFTTAALGGEIEVPTLAGRASFTVPEGTQSGKTFRLRGKGIKGLHSSIAGDLYVHVQVETPVKLTDQQRDLLKQFEKSLAEGGPRHSPQSKSWFDRVKSFFE</sequence>